<accession>Q8JIM3</accession>
<accession>P83339</accession>
<protein>
    <recommendedName>
        <fullName>Growth hormone-releasing peptides</fullName>
    </recommendedName>
    <component>
        <recommendedName>
            <fullName>Growth hormone-releasing peptide</fullName>
            <shortName>GH-releasing peptide</shortName>
        </recommendedName>
        <alternativeName>
            <fullName>fGRP</fullName>
        </alternativeName>
    </component>
    <component>
        <recommendedName>
            <fullName>fGRP-related peptide 1</fullName>
        </recommendedName>
    </component>
    <component>
        <recommendedName>
            <fullName>fGRP-related peptide 2</fullName>
        </recommendedName>
    </component>
    <component>
        <recommendedName>
            <fullName>fGRP-related peptide 3</fullName>
        </recommendedName>
    </component>
</protein>
<feature type="signal peptide" evidence="1">
    <location>
        <begin position="1"/>
        <end position="25"/>
    </location>
</feature>
<feature type="propeptide" id="PRO_0000009937" evidence="2">
    <location>
        <begin position="26"/>
        <end position="95"/>
    </location>
</feature>
<feature type="peptide" id="PRO_0000009938" description="Growth hormone-releasing peptide">
    <location>
        <begin position="96"/>
        <end position="107"/>
    </location>
</feature>
<feature type="propeptide" id="PRO_0000009939">
    <location>
        <begin position="110"/>
        <end position="127"/>
    </location>
</feature>
<feature type="peptide" id="PRO_0000009940" description="fGRP-related peptide 1">
    <location>
        <begin position="128"/>
        <end position="136"/>
    </location>
</feature>
<feature type="peptide" id="PRO_0000009941" description="fGRP-related peptide 2">
    <location>
        <begin position="139"/>
        <end position="156"/>
    </location>
</feature>
<feature type="peptide" id="PRO_0000009942" description="fGRP-related peptide 3">
    <location>
        <begin position="159"/>
        <end position="176"/>
    </location>
</feature>
<feature type="propeptide" id="PRO_0000009943">
    <location>
        <begin position="179"/>
        <end position="221"/>
    </location>
</feature>
<feature type="modified residue" description="Phenylalanine amide" evidence="2 3">
    <location>
        <position position="107"/>
    </location>
</feature>
<feature type="modified residue" description="Phenylalanine amide" evidence="3">
    <location>
        <position position="136"/>
    </location>
</feature>
<feature type="modified residue" description="Phenylalanine amide" evidence="3">
    <location>
        <position position="156"/>
    </location>
</feature>
<feature type="modified residue" description="Phenylalanine amide" evidence="3">
    <location>
        <position position="176"/>
    </location>
</feature>
<evidence type="ECO:0000255" key="1"/>
<evidence type="ECO:0000269" key="2">
    <source>
    </source>
</evidence>
<evidence type="ECO:0000269" key="3">
    <source>
    </source>
</evidence>
<evidence type="ECO:0000305" key="4"/>
<name>GHRP_AQUCT</name>
<keyword id="KW-0027">Amidation</keyword>
<keyword id="KW-0165">Cleavage on pair of basic residues</keyword>
<keyword id="KW-0903">Direct protein sequencing</keyword>
<keyword id="KW-0527">Neuropeptide</keyword>
<keyword id="KW-0964">Secreted</keyword>
<keyword id="KW-0732">Signal</keyword>
<organism>
    <name type="scientific">Aquarana catesbeiana</name>
    <name type="common">American bullfrog</name>
    <name type="synonym">Rana catesbeiana</name>
    <dbReference type="NCBI Taxonomy" id="8400"/>
    <lineage>
        <taxon>Eukaryota</taxon>
        <taxon>Metazoa</taxon>
        <taxon>Chordata</taxon>
        <taxon>Craniata</taxon>
        <taxon>Vertebrata</taxon>
        <taxon>Euteleostomi</taxon>
        <taxon>Amphibia</taxon>
        <taxon>Batrachia</taxon>
        <taxon>Anura</taxon>
        <taxon>Neobatrachia</taxon>
        <taxon>Ranoidea</taxon>
        <taxon>Ranidae</taxon>
        <taxon>Aquarana</taxon>
    </lineage>
</organism>
<proteinExistence type="evidence at protein level"/>
<dbReference type="EMBL" id="AB080743">
    <property type="protein sequence ID" value="BAC11854.1"/>
    <property type="molecule type" value="mRNA"/>
</dbReference>
<dbReference type="GO" id="GO:0005576">
    <property type="term" value="C:extracellular region"/>
    <property type="evidence" value="ECO:0007669"/>
    <property type="project" value="UniProtKB-SubCell"/>
</dbReference>
<dbReference type="GO" id="GO:0005102">
    <property type="term" value="F:signaling receptor binding"/>
    <property type="evidence" value="ECO:0007669"/>
    <property type="project" value="TreeGrafter"/>
</dbReference>
<dbReference type="GO" id="GO:0046879">
    <property type="term" value="P:hormone secretion"/>
    <property type="evidence" value="ECO:0000314"/>
    <property type="project" value="UniProtKB"/>
</dbReference>
<dbReference type="GO" id="GO:0032277">
    <property type="term" value="P:negative regulation of gonadotropin secretion"/>
    <property type="evidence" value="ECO:0007669"/>
    <property type="project" value="TreeGrafter"/>
</dbReference>
<dbReference type="GO" id="GO:0007218">
    <property type="term" value="P:neuropeptide signaling pathway"/>
    <property type="evidence" value="ECO:0000304"/>
    <property type="project" value="UniProtKB"/>
</dbReference>
<dbReference type="InterPro" id="IPR002544">
    <property type="entry name" value="FMRFamid-related_peptide-like"/>
</dbReference>
<dbReference type="InterPro" id="IPR026297">
    <property type="entry name" value="FMRFamide-related/fGRP"/>
</dbReference>
<dbReference type="PANTHER" id="PTHR14403:SF6">
    <property type="entry name" value="PRO-FMRFAMIDE-RELATED NEUROPEPTIDE VF"/>
    <property type="match status" value="1"/>
</dbReference>
<dbReference type="PANTHER" id="PTHR14403">
    <property type="entry name" value="RFAMIDE PEPTIDE GONADOTROPIN INHIBITORY HORMONE"/>
    <property type="match status" value="1"/>
</dbReference>
<dbReference type="Pfam" id="PF01581">
    <property type="entry name" value="FARP"/>
    <property type="match status" value="2"/>
</dbReference>
<sequence>MHLKIGTLTIRTIMLFTLCTFLTLFAFSTCFDETKTINLESQEIYDDLFESKEDLQNERNGNSDEYRYMGSNSINDINRYNRLSMQPENEFLQERSLKPAANLPLRFGRTSDDKIAKSIPSFDKIAKSIPNLPQRFGRYLSGKTKVQSMANLPQRFGRAQYTNHFVHSLDTLPLRFGRTPHSDRLQYEMNSHPLELKNPEEDSDRKKRQAMTFRIRTDLQM</sequence>
<comment type="function">
    <text evidence="2">Primary role is to release GH from the pituitary. May act as an endogenous ligand in the bullfrog hypothalamo-hypophysial system.</text>
</comment>
<comment type="subcellular location">
    <subcellularLocation>
        <location>Secreted</location>
    </subcellularLocation>
</comment>
<comment type="tissue specificity">
    <text evidence="2">Observed in the suprachiasmatic nucleus and in several telencephalic and diencephalic regions.</text>
</comment>
<comment type="mass spectrometry">
    <molecule>Growth hormone-releasing peptide</molecule>
</comment>
<comment type="similarity">
    <text evidence="4">Belongs to the FARP (FMRFamide related peptide) family.</text>
</comment>
<reference key="1">
    <citation type="journal article" date="2002" name="J. Endocrinol.">
        <title>Identification of a cDNA encoding a novel amphibian growth hormone-releasing peptide and localization of its transcript.</title>
        <authorList>
            <person name="Sawada K."/>
            <person name="Ukena K."/>
            <person name="Kikuyama S."/>
            <person name="Tsutsui K."/>
        </authorList>
    </citation>
    <scope>NUCLEOTIDE SEQUENCE [MRNA]</scope>
    <scope>AMIDATION AT PHE-107; PHE-136; PHE-156 AND PHE-176</scope>
    <source>
        <tissue>Brain</tissue>
    </source>
</reference>
<reference key="2">
    <citation type="journal article" date="2002" name="Endocrinology">
        <title>A novel amphibian hypothalamic neuropeptide: isolation, localization, and biological activity.</title>
        <authorList>
            <person name="Koda A."/>
            <person name="Ukena K."/>
            <person name="Teranishi H."/>
            <person name="Ohta S."/>
            <person name="Yamamoto K."/>
            <person name="Kikuyama S."/>
            <person name="Tsutsui K."/>
        </authorList>
    </citation>
    <scope>PROTEIN SEQUENCE OF 96-107</scope>
    <scope>AMIDATION AT PHE-107</scope>
    <scope>SYNTHESIS</scope>
    <scope>FUNCTION</scope>
    <scope>TISSUE SPECIFICITY</scope>
    <scope>MASS SPECTROMETRY</scope>
    <source>
        <tissue>Hypothalamus</tissue>
    </source>
</reference>